<reference key="1">
    <citation type="journal article" date="2007" name="Proc. Natl. Acad. Sci. U.S.A.">
        <title>Using plastid genome-scale data to resolve enigmatic relationships among basal angiosperms.</title>
        <authorList>
            <person name="Moore M.J."/>
            <person name="Bell C.D."/>
            <person name="Soltis P.S."/>
            <person name="Soltis D.E."/>
        </authorList>
    </citation>
    <scope>NUCLEOTIDE SEQUENCE [LARGE SCALE GENOMIC DNA]</scope>
</reference>
<feature type="chain" id="PRO_0000354134" description="Photosystem I reaction center subunit IX">
    <location>
        <begin position="1"/>
        <end position="44"/>
    </location>
</feature>
<feature type="transmembrane region" description="Helical" evidence="1">
    <location>
        <begin position="7"/>
        <end position="27"/>
    </location>
</feature>
<accession>A8SEC3</accession>
<sequence>MRDIKTYLSVAPVISTLWFGSLAGLLIEINRLFPDALVFPFFSF</sequence>
<geneLocation type="chloroplast"/>
<proteinExistence type="inferred from homology"/>
<evidence type="ECO:0000255" key="1">
    <source>
        <dbReference type="HAMAP-Rule" id="MF_00522"/>
    </source>
</evidence>
<comment type="function">
    <text evidence="1">May help in the organization of the PsaE and PsaF subunits.</text>
</comment>
<comment type="subcellular location">
    <subcellularLocation>
        <location evidence="1">Plastid</location>
        <location evidence="1">Chloroplast thylakoid membrane</location>
        <topology evidence="1">Single-pass membrane protein</topology>
    </subcellularLocation>
</comment>
<comment type="similarity">
    <text evidence="1">Belongs to the PsaJ family.</text>
</comment>
<dbReference type="EMBL" id="EF614270">
    <property type="protein sequence ID" value="ABQ81470.1"/>
    <property type="molecule type" value="Genomic_DNA"/>
</dbReference>
<dbReference type="RefSeq" id="YP_001542467.1">
    <property type="nucleotide sequence ID" value="NC_009962.1"/>
</dbReference>
<dbReference type="SMR" id="A8SEC3"/>
<dbReference type="GeneID" id="5729418"/>
<dbReference type="GO" id="GO:0009535">
    <property type="term" value="C:chloroplast thylakoid membrane"/>
    <property type="evidence" value="ECO:0007669"/>
    <property type="project" value="UniProtKB-SubCell"/>
</dbReference>
<dbReference type="GO" id="GO:0009522">
    <property type="term" value="C:photosystem I"/>
    <property type="evidence" value="ECO:0007669"/>
    <property type="project" value="UniProtKB-KW"/>
</dbReference>
<dbReference type="GO" id="GO:0015979">
    <property type="term" value="P:photosynthesis"/>
    <property type="evidence" value="ECO:0007669"/>
    <property type="project" value="UniProtKB-UniRule"/>
</dbReference>
<dbReference type="FunFam" id="1.20.5.510:FF:000001">
    <property type="entry name" value="Photosystem I reaction center subunit IX"/>
    <property type="match status" value="1"/>
</dbReference>
<dbReference type="Gene3D" id="1.20.5.510">
    <property type="entry name" value="Single helix bin"/>
    <property type="match status" value="1"/>
</dbReference>
<dbReference type="HAMAP" id="MF_00522">
    <property type="entry name" value="PSI_PsaJ"/>
    <property type="match status" value="1"/>
</dbReference>
<dbReference type="InterPro" id="IPR002615">
    <property type="entry name" value="PSI_PsaJ"/>
</dbReference>
<dbReference type="InterPro" id="IPR036062">
    <property type="entry name" value="PSI_PsaJ_sf"/>
</dbReference>
<dbReference type="PANTHER" id="PTHR36082">
    <property type="match status" value="1"/>
</dbReference>
<dbReference type="PANTHER" id="PTHR36082:SF2">
    <property type="entry name" value="PHOTOSYSTEM I REACTION CENTER SUBUNIT IX"/>
    <property type="match status" value="1"/>
</dbReference>
<dbReference type="Pfam" id="PF01701">
    <property type="entry name" value="PSI_PsaJ"/>
    <property type="match status" value="1"/>
</dbReference>
<dbReference type="SUPFAM" id="SSF81544">
    <property type="entry name" value="Subunit IX of photosystem I reaction centre, PsaJ"/>
    <property type="match status" value="1"/>
</dbReference>
<keyword id="KW-0150">Chloroplast</keyword>
<keyword id="KW-0472">Membrane</keyword>
<keyword id="KW-0602">Photosynthesis</keyword>
<keyword id="KW-0603">Photosystem I</keyword>
<keyword id="KW-0934">Plastid</keyword>
<keyword id="KW-0793">Thylakoid</keyword>
<keyword id="KW-0812">Transmembrane</keyword>
<keyword id="KW-1133">Transmembrane helix</keyword>
<gene>
    <name evidence="1" type="primary">psaJ</name>
</gene>
<name>PSAJ_CERDE</name>
<organism>
    <name type="scientific">Ceratophyllum demersum</name>
    <name type="common">Rigid hornwort</name>
    <name type="synonym">Coontail</name>
    <dbReference type="NCBI Taxonomy" id="4428"/>
    <lineage>
        <taxon>Eukaryota</taxon>
        <taxon>Viridiplantae</taxon>
        <taxon>Streptophyta</taxon>
        <taxon>Embryophyta</taxon>
        <taxon>Tracheophyta</taxon>
        <taxon>Spermatophyta</taxon>
        <taxon>Magnoliopsida</taxon>
        <taxon>Ceratophyllales</taxon>
        <taxon>Ceratophyllaceae</taxon>
        <taxon>Ceratophyllum</taxon>
    </lineage>
</organism>
<protein>
    <recommendedName>
        <fullName evidence="1">Photosystem I reaction center subunit IX</fullName>
    </recommendedName>
    <alternativeName>
        <fullName evidence="1">PSI-J</fullName>
    </alternativeName>
</protein>